<organism>
    <name type="scientific">Homo sapiens</name>
    <name type="common">Human</name>
    <dbReference type="NCBI Taxonomy" id="9606"/>
    <lineage>
        <taxon>Eukaryota</taxon>
        <taxon>Metazoa</taxon>
        <taxon>Chordata</taxon>
        <taxon>Craniata</taxon>
        <taxon>Vertebrata</taxon>
        <taxon>Euteleostomi</taxon>
        <taxon>Mammalia</taxon>
        <taxon>Eutheria</taxon>
        <taxon>Euarchontoglires</taxon>
        <taxon>Primates</taxon>
        <taxon>Haplorrhini</taxon>
        <taxon>Catarrhini</taxon>
        <taxon>Hominidae</taxon>
        <taxon>Homo</taxon>
    </lineage>
</organism>
<evidence type="ECO:0000256" key="1">
    <source>
        <dbReference type="SAM" id="MobiDB-lite"/>
    </source>
</evidence>
<evidence type="ECO:0000269" key="2">
    <source>
    </source>
</evidence>
<evidence type="ECO:0000269" key="3">
    <source>
    </source>
</evidence>
<evidence type="ECO:0000303" key="4">
    <source>
    </source>
</evidence>
<evidence type="ECO:0000303" key="5">
    <source>
    </source>
</evidence>
<evidence type="ECO:0000305" key="6"/>
<reference key="1">
    <citation type="submission" date="2001-03" db="EMBL/GenBank/DDBJ databases">
        <title>Molecular cloning and expression analysis of a novel gene VEST-1 from human vestibular cDNA library; a candidate gene for hearing loss.</title>
        <authorList>
            <person name="Abe S."/>
            <person name="Koyama K."/>
            <person name="Takumi Y."/>
            <person name="Usami S."/>
            <person name="Inoue Y."/>
            <person name="Nakamura Y."/>
        </authorList>
    </citation>
    <scope>NUCLEOTIDE SEQUENCE [MRNA] (ISOFORM 2)</scope>
    <source>
        <tissue>Fetal brain</tissue>
    </source>
</reference>
<reference key="2">
    <citation type="journal article" date="2004" name="Nat. Genet.">
        <title>Complete sequencing and characterization of 21,243 full-length human cDNAs.</title>
        <authorList>
            <person name="Ota T."/>
            <person name="Suzuki Y."/>
            <person name="Nishikawa T."/>
            <person name="Otsuki T."/>
            <person name="Sugiyama T."/>
            <person name="Irie R."/>
            <person name="Wakamatsu A."/>
            <person name="Hayashi K."/>
            <person name="Sato H."/>
            <person name="Nagai K."/>
            <person name="Kimura K."/>
            <person name="Makita H."/>
            <person name="Sekine M."/>
            <person name="Obayashi M."/>
            <person name="Nishi T."/>
            <person name="Shibahara T."/>
            <person name="Tanaka T."/>
            <person name="Ishii S."/>
            <person name="Yamamoto J."/>
            <person name="Saito K."/>
            <person name="Kawai Y."/>
            <person name="Isono Y."/>
            <person name="Nakamura Y."/>
            <person name="Nagahari K."/>
            <person name="Murakami K."/>
            <person name="Yasuda T."/>
            <person name="Iwayanagi T."/>
            <person name="Wagatsuma M."/>
            <person name="Shiratori A."/>
            <person name="Sudo H."/>
            <person name="Hosoiri T."/>
            <person name="Kaku Y."/>
            <person name="Kodaira H."/>
            <person name="Kondo H."/>
            <person name="Sugawara M."/>
            <person name="Takahashi M."/>
            <person name="Kanda K."/>
            <person name="Yokoi T."/>
            <person name="Furuya T."/>
            <person name="Kikkawa E."/>
            <person name="Omura Y."/>
            <person name="Abe K."/>
            <person name="Kamihara K."/>
            <person name="Katsuta N."/>
            <person name="Sato K."/>
            <person name="Tanikawa M."/>
            <person name="Yamazaki M."/>
            <person name="Ninomiya K."/>
            <person name="Ishibashi T."/>
            <person name="Yamashita H."/>
            <person name="Murakawa K."/>
            <person name="Fujimori K."/>
            <person name="Tanai H."/>
            <person name="Kimata M."/>
            <person name="Watanabe M."/>
            <person name="Hiraoka S."/>
            <person name="Chiba Y."/>
            <person name="Ishida S."/>
            <person name="Ono Y."/>
            <person name="Takiguchi S."/>
            <person name="Watanabe S."/>
            <person name="Yosida M."/>
            <person name="Hotuta T."/>
            <person name="Kusano J."/>
            <person name="Kanehori K."/>
            <person name="Takahashi-Fujii A."/>
            <person name="Hara H."/>
            <person name="Tanase T.-O."/>
            <person name="Nomura Y."/>
            <person name="Togiya S."/>
            <person name="Komai F."/>
            <person name="Hara R."/>
            <person name="Takeuchi K."/>
            <person name="Arita M."/>
            <person name="Imose N."/>
            <person name="Musashino K."/>
            <person name="Yuuki H."/>
            <person name="Oshima A."/>
            <person name="Sasaki N."/>
            <person name="Aotsuka S."/>
            <person name="Yoshikawa Y."/>
            <person name="Matsunawa H."/>
            <person name="Ichihara T."/>
            <person name="Shiohata N."/>
            <person name="Sano S."/>
            <person name="Moriya S."/>
            <person name="Momiyama H."/>
            <person name="Satoh N."/>
            <person name="Takami S."/>
            <person name="Terashima Y."/>
            <person name="Suzuki O."/>
            <person name="Nakagawa S."/>
            <person name="Senoh A."/>
            <person name="Mizoguchi H."/>
            <person name="Goto Y."/>
            <person name="Shimizu F."/>
            <person name="Wakebe H."/>
            <person name="Hishigaki H."/>
            <person name="Watanabe T."/>
            <person name="Sugiyama A."/>
            <person name="Takemoto M."/>
            <person name="Kawakami B."/>
            <person name="Yamazaki M."/>
            <person name="Watanabe K."/>
            <person name="Kumagai A."/>
            <person name="Itakura S."/>
            <person name="Fukuzumi Y."/>
            <person name="Fujimori Y."/>
            <person name="Komiyama M."/>
            <person name="Tashiro H."/>
            <person name="Tanigami A."/>
            <person name="Fujiwara T."/>
            <person name="Ono T."/>
            <person name="Yamada K."/>
            <person name="Fujii Y."/>
            <person name="Ozaki K."/>
            <person name="Hirao M."/>
            <person name="Ohmori Y."/>
            <person name="Kawabata A."/>
            <person name="Hikiji T."/>
            <person name="Kobatake N."/>
            <person name="Inagaki H."/>
            <person name="Ikema Y."/>
            <person name="Okamoto S."/>
            <person name="Okitani R."/>
            <person name="Kawakami T."/>
            <person name="Noguchi S."/>
            <person name="Itoh T."/>
            <person name="Shigeta K."/>
            <person name="Senba T."/>
            <person name="Matsumura K."/>
            <person name="Nakajima Y."/>
            <person name="Mizuno T."/>
            <person name="Morinaga M."/>
            <person name="Sasaki M."/>
            <person name="Togashi T."/>
            <person name="Oyama M."/>
            <person name="Hata H."/>
            <person name="Watanabe M."/>
            <person name="Komatsu T."/>
            <person name="Mizushima-Sugano J."/>
            <person name="Satoh T."/>
            <person name="Shirai Y."/>
            <person name="Takahashi Y."/>
            <person name="Nakagawa K."/>
            <person name="Okumura K."/>
            <person name="Nagase T."/>
            <person name="Nomura N."/>
            <person name="Kikuchi H."/>
            <person name="Masuho Y."/>
            <person name="Yamashita R."/>
            <person name="Nakai K."/>
            <person name="Yada T."/>
            <person name="Nakamura Y."/>
            <person name="Ohara O."/>
            <person name="Isogai T."/>
            <person name="Sugano S."/>
        </authorList>
    </citation>
    <scope>NUCLEOTIDE SEQUENCE [LARGE SCALE MRNA] (ISOFORMS 3 AND 4)</scope>
    <source>
        <tissue>Amygdala</tissue>
        <tissue>Astrocyte</tissue>
        <tissue>Brain</tissue>
    </source>
</reference>
<reference key="3">
    <citation type="journal article" date="2007" name="BMC Genomics">
        <title>The full-ORF clone resource of the German cDNA consortium.</title>
        <authorList>
            <person name="Bechtel S."/>
            <person name="Rosenfelder H."/>
            <person name="Duda A."/>
            <person name="Schmidt C.P."/>
            <person name="Ernst U."/>
            <person name="Wellenreuther R."/>
            <person name="Mehrle A."/>
            <person name="Schuster C."/>
            <person name="Bahr A."/>
            <person name="Bloecker H."/>
            <person name="Heubner D."/>
            <person name="Hoerlein A."/>
            <person name="Michel G."/>
            <person name="Wedler H."/>
            <person name="Koehrer K."/>
            <person name="Ottenwaelder B."/>
            <person name="Poustka A."/>
            <person name="Wiemann S."/>
            <person name="Schupp I."/>
        </authorList>
    </citation>
    <scope>NUCLEOTIDE SEQUENCE [LARGE SCALE MRNA] (ISOFORM 3)</scope>
    <source>
        <tissue>Brain</tissue>
    </source>
</reference>
<reference key="4">
    <citation type="journal article" date="2006" name="Nature">
        <title>DNA sequence and analysis of human chromosome 8.</title>
        <authorList>
            <person name="Nusbaum C."/>
            <person name="Mikkelsen T.S."/>
            <person name="Zody M.C."/>
            <person name="Asakawa S."/>
            <person name="Taudien S."/>
            <person name="Garber M."/>
            <person name="Kodira C.D."/>
            <person name="Schueler M.G."/>
            <person name="Shimizu A."/>
            <person name="Whittaker C.A."/>
            <person name="Chang J.L."/>
            <person name="Cuomo C.A."/>
            <person name="Dewar K."/>
            <person name="FitzGerald M.G."/>
            <person name="Yang X."/>
            <person name="Allen N.R."/>
            <person name="Anderson S."/>
            <person name="Asakawa T."/>
            <person name="Blechschmidt K."/>
            <person name="Bloom T."/>
            <person name="Borowsky M.L."/>
            <person name="Butler J."/>
            <person name="Cook A."/>
            <person name="Corum B."/>
            <person name="DeArellano K."/>
            <person name="DeCaprio D."/>
            <person name="Dooley K.T."/>
            <person name="Dorris L. III"/>
            <person name="Engels R."/>
            <person name="Gloeckner G."/>
            <person name="Hafez N."/>
            <person name="Hagopian D.S."/>
            <person name="Hall J.L."/>
            <person name="Ishikawa S.K."/>
            <person name="Jaffe D.B."/>
            <person name="Kamat A."/>
            <person name="Kudoh J."/>
            <person name="Lehmann R."/>
            <person name="Lokitsang T."/>
            <person name="Macdonald P."/>
            <person name="Major J.E."/>
            <person name="Matthews C.D."/>
            <person name="Mauceli E."/>
            <person name="Menzel U."/>
            <person name="Mihalev A.H."/>
            <person name="Minoshima S."/>
            <person name="Murayama Y."/>
            <person name="Naylor J.W."/>
            <person name="Nicol R."/>
            <person name="Nguyen C."/>
            <person name="O'Leary S.B."/>
            <person name="O'Neill K."/>
            <person name="Parker S.C.J."/>
            <person name="Polley A."/>
            <person name="Raymond C.K."/>
            <person name="Reichwald K."/>
            <person name="Rodriguez J."/>
            <person name="Sasaki T."/>
            <person name="Schilhabel M."/>
            <person name="Siddiqui R."/>
            <person name="Smith C.L."/>
            <person name="Sneddon T.P."/>
            <person name="Talamas J.A."/>
            <person name="Tenzin P."/>
            <person name="Topham K."/>
            <person name="Venkataraman V."/>
            <person name="Wen G."/>
            <person name="Yamazaki S."/>
            <person name="Young S.K."/>
            <person name="Zeng Q."/>
            <person name="Zimmer A.R."/>
            <person name="Rosenthal A."/>
            <person name="Birren B.W."/>
            <person name="Platzer M."/>
            <person name="Shimizu N."/>
            <person name="Lander E.S."/>
        </authorList>
    </citation>
    <scope>NUCLEOTIDE SEQUENCE [LARGE SCALE GENOMIC DNA]</scope>
</reference>
<reference key="5">
    <citation type="submission" date="2005-07" db="EMBL/GenBank/DDBJ databases">
        <authorList>
            <person name="Mural R.J."/>
            <person name="Istrail S."/>
            <person name="Sutton G.G."/>
            <person name="Florea L."/>
            <person name="Halpern A.L."/>
            <person name="Mobarry C.M."/>
            <person name="Lippert R."/>
            <person name="Walenz B."/>
            <person name="Shatkay H."/>
            <person name="Dew I."/>
            <person name="Miller J.R."/>
            <person name="Flanigan M.J."/>
            <person name="Edwards N.J."/>
            <person name="Bolanos R."/>
            <person name="Fasulo D."/>
            <person name="Halldorsson B.V."/>
            <person name="Hannenhalli S."/>
            <person name="Turner R."/>
            <person name="Yooseph S."/>
            <person name="Lu F."/>
            <person name="Nusskern D.R."/>
            <person name="Shue B.C."/>
            <person name="Zheng X.H."/>
            <person name="Zhong F."/>
            <person name="Delcher A.L."/>
            <person name="Huson D.H."/>
            <person name="Kravitz S.A."/>
            <person name="Mouchard L."/>
            <person name="Reinert K."/>
            <person name="Remington K.A."/>
            <person name="Clark A.G."/>
            <person name="Waterman M.S."/>
            <person name="Eichler E.E."/>
            <person name="Adams M.D."/>
            <person name="Hunkapiller M.W."/>
            <person name="Myers E.W."/>
            <person name="Venter J.C."/>
        </authorList>
    </citation>
    <scope>NUCLEOTIDE SEQUENCE [LARGE SCALE GENOMIC DNA]</scope>
</reference>
<reference key="6">
    <citation type="journal article" date="2004" name="Genome Res.">
        <title>The status, quality, and expansion of the NIH full-length cDNA project: the Mammalian Gene Collection (MGC).</title>
        <authorList>
            <consortium name="The MGC Project Team"/>
        </authorList>
    </citation>
    <scope>NUCLEOTIDE SEQUENCE [LARGE SCALE MRNA] (ISOFORM 1)</scope>
    <scope>VARIANT THR-512</scope>
    <source>
        <tissue>Brain</tissue>
    </source>
</reference>
<reference key="7">
    <citation type="journal article" date="2006" name="Science">
        <title>The consensus coding sequences of human breast and colorectal cancers.</title>
        <authorList>
            <person name="Sjoeblom T."/>
            <person name="Jones S."/>
            <person name="Wood L.D."/>
            <person name="Parsons D.W."/>
            <person name="Lin J."/>
            <person name="Barber T.D."/>
            <person name="Mandelker D."/>
            <person name="Leary R.J."/>
            <person name="Ptak J."/>
            <person name="Silliman N."/>
            <person name="Szabo S."/>
            <person name="Buckhaults P."/>
            <person name="Farrell C."/>
            <person name="Meeh P."/>
            <person name="Markowitz S.D."/>
            <person name="Willis J."/>
            <person name="Dawson D."/>
            <person name="Willson J.K.V."/>
            <person name="Gazdar A.F."/>
            <person name="Hartigan J."/>
            <person name="Wu L."/>
            <person name="Liu C."/>
            <person name="Parmigiani G."/>
            <person name="Park B.H."/>
            <person name="Bachman K.E."/>
            <person name="Papadopoulos N."/>
            <person name="Vogelstein B."/>
            <person name="Kinzler K.W."/>
            <person name="Velculescu V.E."/>
        </authorList>
    </citation>
    <scope>VARIANT [LARGE SCALE ANALYSIS] ASN-161</scope>
</reference>
<gene>
    <name type="primary">C8orf34</name>
</gene>
<protein>
    <recommendedName>
        <fullName>Uncharacterized protein C8orf34</fullName>
    </recommendedName>
    <alternativeName>
        <fullName>Protein VEST-1</fullName>
    </alternativeName>
</protein>
<name>CH034_HUMAN</name>
<dbReference type="EMBL" id="AB056652">
    <property type="protein sequence ID" value="BAB64433.1"/>
    <property type="molecule type" value="mRNA"/>
</dbReference>
<dbReference type="EMBL" id="AK094191">
    <property type="protein sequence ID" value="BAC04304.1"/>
    <property type="molecule type" value="mRNA"/>
</dbReference>
<dbReference type="EMBL" id="AK094650">
    <property type="protein sequence ID" value="BAC04395.1"/>
    <property type="molecule type" value="mRNA"/>
</dbReference>
<dbReference type="EMBL" id="AK291436">
    <property type="protein sequence ID" value="BAF84125.1"/>
    <property type="molecule type" value="mRNA"/>
</dbReference>
<dbReference type="EMBL" id="AL834454">
    <property type="protein sequence ID" value="CAD39114.2"/>
    <property type="molecule type" value="mRNA"/>
</dbReference>
<dbReference type="EMBL" id="AC011884">
    <property type="status" value="NOT_ANNOTATED_CDS"/>
    <property type="molecule type" value="Genomic_DNA"/>
</dbReference>
<dbReference type="EMBL" id="AC067871">
    <property type="status" value="NOT_ANNOTATED_CDS"/>
    <property type="molecule type" value="Genomic_DNA"/>
</dbReference>
<dbReference type="EMBL" id="AC083967">
    <property type="status" value="NOT_ANNOTATED_CDS"/>
    <property type="molecule type" value="Genomic_DNA"/>
</dbReference>
<dbReference type="EMBL" id="AC090096">
    <property type="status" value="NOT_ANNOTATED_CDS"/>
    <property type="molecule type" value="Genomic_DNA"/>
</dbReference>
<dbReference type="EMBL" id="KF458778">
    <property type="status" value="NOT_ANNOTATED_CDS"/>
    <property type="molecule type" value="Genomic_DNA"/>
</dbReference>
<dbReference type="EMBL" id="KF458774">
    <property type="status" value="NOT_ANNOTATED_CDS"/>
    <property type="molecule type" value="Genomic_DNA"/>
</dbReference>
<dbReference type="EMBL" id="CH471068">
    <property type="protein sequence ID" value="EAW86947.1"/>
    <property type="molecule type" value="Genomic_DNA"/>
</dbReference>
<dbReference type="EMBL" id="CH471068">
    <property type="protein sequence ID" value="EAW86949.1"/>
    <property type="molecule type" value="Genomic_DNA"/>
</dbReference>
<dbReference type="EMBL" id="BC041961">
    <property type="protein sequence ID" value="AAH41961.1"/>
    <property type="status" value="ALT_SEQ"/>
    <property type="molecule type" value="mRNA"/>
</dbReference>
<dbReference type="CCDS" id="CCDS6203.2">
    <molecule id="Q49A92-6"/>
</dbReference>
<dbReference type="RefSeq" id="NP_443190.2">
    <molecule id="Q49A92-6"/>
    <property type="nucleotide sequence ID" value="NM_052958.4"/>
</dbReference>
<dbReference type="SMR" id="Q49A92"/>
<dbReference type="BioGRID" id="125497">
    <property type="interactions" value="13"/>
</dbReference>
<dbReference type="FunCoup" id="Q49A92">
    <property type="interactions" value="169"/>
</dbReference>
<dbReference type="IntAct" id="Q49A92">
    <property type="interactions" value="3"/>
</dbReference>
<dbReference type="STRING" id="9606.ENSP00000427820"/>
<dbReference type="iPTMnet" id="Q49A92"/>
<dbReference type="PhosphoSitePlus" id="Q49A92"/>
<dbReference type="BioMuta" id="C8orf34"/>
<dbReference type="DMDM" id="187470865"/>
<dbReference type="jPOST" id="Q49A92"/>
<dbReference type="MassIVE" id="Q49A92"/>
<dbReference type="PaxDb" id="9606-ENSP00000427820"/>
<dbReference type="PeptideAtlas" id="Q49A92"/>
<dbReference type="ProteomicsDB" id="33789"/>
<dbReference type="ProteomicsDB" id="62033">
    <molecule id="Q49A92-2"/>
</dbReference>
<dbReference type="ProteomicsDB" id="62034">
    <molecule id="Q49A92-3"/>
</dbReference>
<dbReference type="Antibodypedia" id="25036">
    <property type="antibodies" value="60 antibodies from 16 providers"/>
</dbReference>
<dbReference type="DNASU" id="116328"/>
<dbReference type="Ensembl" id="ENST00000325233.3">
    <molecule id="Q49A92-4"/>
    <property type="protein sequence ID" value="ENSP00000319532.3"/>
    <property type="gene ID" value="ENSG00000165084.16"/>
</dbReference>
<dbReference type="Ensembl" id="ENST00000337103.8">
    <molecule id="Q49A92-2"/>
    <property type="protein sequence ID" value="ENSP00000337174.4"/>
    <property type="gene ID" value="ENSG00000165084.16"/>
</dbReference>
<dbReference type="Ensembl" id="ENST00000348340.6">
    <molecule id="Q49A92-3"/>
    <property type="protein sequence ID" value="ENSP00000345255.2"/>
    <property type="gene ID" value="ENSG00000165084.16"/>
</dbReference>
<dbReference type="Ensembl" id="ENST00000518698.6">
    <molecule id="Q49A92-6"/>
    <property type="protein sequence ID" value="ENSP00000427820.1"/>
    <property type="gene ID" value="ENSG00000165084.16"/>
</dbReference>
<dbReference type="GeneID" id="116328"/>
<dbReference type="KEGG" id="hsa:116328"/>
<dbReference type="MANE-Select" id="ENST00000518698.6">
    <property type="protein sequence ID" value="ENSP00000427820.1"/>
    <property type="RefSeq nucleotide sequence ID" value="NM_052958.4"/>
    <property type="RefSeq protein sequence ID" value="NP_443190.2"/>
</dbReference>
<dbReference type="UCSC" id="uc003xyb.4">
    <molecule id="Q49A92-6"/>
    <property type="organism name" value="human"/>
</dbReference>
<dbReference type="AGR" id="HGNC:30905"/>
<dbReference type="CTD" id="116328"/>
<dbReference type="DisGeNET" id="116328"/>
<dbReference type="GeneCards" id="C8orf34"/>
<dbReference type="HGNC" id="HGNC:30905">
    <property type="gene designation" value="C8orf34"/>
</dbReference>
<dbReference type="HPA" id="ENSG00000165084">
    <property type="expression patterns" value="Tissue enhanced (fallopian tube, parathyroid gland)"/>
</dbReference>
<dbReference type="neXtProt" id="NX_Q49A92"/>
<dbReference type="OpenTargets" id="ENSG00000165084"/>
<dbReference type="PharmGKB" id="PA142672353"/>
<dbReference type="VEuPathDB" id="HostDB:ENSG00000165084"/>
<dbReference type="eggNOG" id="ENOG502QUHG">
    <property type="taxonomic scope" value="Eukaryota"/>
</dbReference>
<dbReference type="GeneTree" id="ENSGT00390000005870"/>
<dbReference type="HOGENOM" id="CLU_1948122_0_0_1"/>
<dbReference type="InParanoid" id="Q49A92"/>
<dbReference type="OMA" id="NTRREYT"/>
<dbReference type="OrthoDB" id="9945857at2759"/>
<dbReference type="PAN-GO" id="Q49A92">
    <property type="GO annotations" value="0 GO annotations based on evolutionary models"/>
</dbReference>
<dbReference type="PhylomeDB" id="Q49A92"/>
<dbReference type="TreeFam" id="TF332826"/>
<dbReference type="PathwayCommons" id="Q49A92"/>
<dbReference type="SignaLink" id="Q49A92"/>
<dbReference type="BioGRID-ORCS" id="116328">
    <property type="hits" value="15 hits in 1135 CRISPR screens"/>
</dbReference>
<dbReference type="ChiTaRS" id="C8orf34">
    <property type="organism name" value="human"/>
</dbReference>
<dbReference type="GenomeRNAi" id="116328"/>
<dbReference type="Pharos" id="Q49A92">
    <property type="development level" value="Tbio"/>
</dbReference>
<dbReference type="PRO" id="PR:Q49A92"/>
<dbReference type="Proteomes" id="UP000005640">
    <property type="component" value="Chromosome 8"/>
</dbReference>
<dbReference type="RNAct" id="Q49A92">
    <property type="molecule type" value="protein"/>
</dbReference>
<dbReference type="Bgee" id="ENSG00000165084">
    <property type="expression patterns" value="Expressed in cortical plate and 126 other cell types or tissues"/>
</dbReference>
<dbReference type="ExpressionAtlas" id="Q49A92">
    <property type="expression patterns" value="baseline and differential"/>
</dbReference>
<dbReference type="CDD" id="cd22980">
    <property type="entry name" value="DD_VEST1"/>
    <property type="match status" value="1"/>
</dbReference>
<dbReference type="Gene3D" id="1.20.890.10">
    <property type="entry name" value="cAMP-dependent protein kinase regulatory subunit, dimerization-anchoring domain"/>
    <property type="match status" value="1"/>
</dbReference>
<dbReference type="InterPro" id="IPR040687">
    <property type="entry name" value="DUF5586"/>
</dbReference>
<dbReference type="PANTHER" id="PTHR32000:SF3">
    <property type="entry name" value="RIKEN CDNA A830018L16 GENE"/>
    <property type="match status" value="1"/>
</dbReference>
<dbReference type="PANTHER" id="PTHR32000">
    <property type="entry name" value="SIMILAR TO HYPOTHETICAL PROTEIN"/>
    <property type="match status" value="1"/>
</dbReference>
<dbReference type="Pfam" id="PF17824">
    <property type="entry name" value="DUF5586"/>
    <property type="match status" value="1"/>
</dbReference>
<dbReference type="SUPFAM" id="SSF47391">
    <property type="entry name" value="Dimerization-anchoring domain of cAMP-dependent PK regulatory subunit"/>
    <property type="match status" value="1"/>
</dbReference>
<proteinExistence type="evidence at protein level"/>
<feature type="chain" id="PRO_0000330039" description="Uncharacterized protein C8orf34">
    <location>
        <begin position="1"/>
        <end position="538"/>
    </location>
</feature>
<feature type="region of interest" description="Disordered" evidence="1">
    <location>
        <begin position="20"/>
        <end position="71"/>
    </location>
</feature>
<feature type="region of interest" description="Disordered" evidence="1">
    <location>
        <begin position="151"/>
        <end position="211"/>
    </location>
</feature>
<feature type="region of interest" description="Disordered" evidence="1">
    <location>
        <begin position="288"/>
        <end position="331"/>
    </location>
</feature>
<feature type="region of interest" description="Disordered" evidence="1">
    <location>
        <begin position="458"/>
        <end position="482"/>
    </location>
</feature>
<feature type="compositionally biased region" description="Basic and acidic residues" evidence="1">
    <location>
        <begin position="154"/>
        <end position="171"/>
    </location>
</feature>
<feature type="splice variant" id="VSP_059473" description="In isoform 4.">
    <original>MSSPLASELSELAALRPGFRLSAPHARVAPRAATHARGRGRASHAGQPRLRSSCPGPSPGKRRVVPSGGAQPRVLPALSSRSHLFPMASHPQTRIQAYLEKNKIGPLFEELMTKLITETPDQPIPFLIDHLQSKQGNRGQLQRTLSGSAALWAESEKSESKGTRRDFRSYDKPWQLNAKKPKKSKSDLAVSNISPPSPDSKSLPRSVEHPKWNWRTKPQSRDFDELNHILQESKKLGKALENLSRSIAISDELDKETVTFNSSLLRPRVIGEWIGREENDADPLAAEMLQPPIPRSKNDQWESEDSGSSPAGSLKMEPKNKGLKQQQQQHKKLLAAMLSQDSFESIHSPTPSVTEEDIDNEDDAMELL</original>
    <variation>MENGFTMCQTGRQHPVACGLHLSGGK</variation>
    <location>
        <begin position="1"/>
        <end position="368"/>
    </location>
</feature>
<feature type="splice variant" id="VSP_059474" description="In isoform 2." evidence="4">
    <location>
        <begin position="1"/>
        <end position="111"/>
    </location>
</feature>
<feature type="splice variant" id="VSP_059475" description="In isoform 3.">
    <location>
        <begin position="1"/>
        <end position="86"/>
    </location>
</feature>
<feature type="splice variant" id="VSP_059476" description="In isoform 3." evidence="4 5">
    <original>EDLND</original>
    <variation>GNFKN</variation>
    <location>
        <begin position="369"/>
        <end position="373"/>
    </location>
</feature>
<feature type="splice variant" id="VSP_059477" description="In isoform 3.">
    <location>
        <begin position="374"/>
        <end position="538"/>
    </location>
</feature>
<feature type="splice variant" id="VSP_059478" description="In isoform 4." evidence="4">
    <original>RSADLLLCVPCSSCPTLVYSGL</original>
    <variation>HLLNQNLCGWDSEFCIFHTLASFLIYK</variation>
    <location>
        <begin position="517"/>
        <end position="538"/>
    </location>
</feature>
<feature type="sequence variant" id="VAR_042690" description="In a colorectal cancer sample; somatic mutation." evidence="3">
    <original>K</original>
    <variation>N</variation>
    <location>
        <position position="161"/>
    </location>
</feature>
<feature type="sequence variant" id="VAR_042691" description="In dbSNP:rs16935065." evidence="2">
    <original>A</original>
    <variation>T</variation>
    <location>
        <position position="512"/>
    </location>
</feature>
<keyword id="KW-0025">Alternative splicing</keyword>
<keyword id="KW-1267">Proteomics identification</keyword>
<keyword id="KW-1185">Reference proteome</keyword>
<accession>Q49A92</accession>
<accession>A0A0C4DFS7</accession>
<accession>A8K5X1</accession>
<accession>G3XAM6</accession>
<accession>Q8N1X0</accession>
<accession>Q8N9M7</accession>
<accession>Q8ND19</accession>
<accession>Q96Q28</accession>
<comment type="alternative products">
    <event type="alternative splicing"/>
    <isoform>
        <id>Q49A92-6</id>
        <name>1</name>
        <sequence type="displayed"/>
    </isoform>
    <isoform>
        <id>Q49A92-2</id>
        <name>2</name>
        <sequence type="described" ref="VSP_059474"/>
    </isoform>
    <isoform>
        <id>Q49A92-3</id>
        <name>3</name>
        <sequence type="described" ref="VSP_059475 VSP_059476 VSP_059477"/>
    </isoform>
    <isoform>
        <id>Q49A92-4</id>
        <name>4</name>
        <sequence type="described" ref="VSP_059473 VSP_059478"/>
    </isoform>
</comment>
<comment type="caution">
    <text evidence="6">It is uncertain whether Met-1 or Met-87 is the initiator methionine.</text>
</comment>
<comment type="sequence caution" evidence="6">
    <conflict type="erroneous initiation">
        <sequence resource="EMBL-CDS" id="AAH41961"/>
    </conflict>
    <text>Truncated N-terminus.</text>
</comment>
<comment type="sequence caution" evidence="6">
    <conflict type="frameshift">
        <sequence resource="EMBL-CDS" id="AAH41961"/>
    </conflict>
</comment>
<sequence>MSSPLASELSELAALRPGFRLSAPHARVAPRAATHARGRGRASHAGQPRLRSSCPGPSPGKRRVVPSGGAQPRVLPALSSRSHLFPMASHPQTRIQAYLEKNKIGPLFEELMTKLITETPDQPIPFLIDHLQSKQGNRGQLQRTLSGSAALWAESEKSESKGTRRDFRSYDKPWQLNAKKPKKSKSDLAVSNISPPSPDSKSLPRSVEHPKWNWRTKPQSRDFDELNHILQESKKLGKALENLSRSIAISDELDKETVTFNSSLLRPRVIGEWIGREENDADPLAAEMLQPPIPRSKNDQWESEDSGSSPAGSLKMEPKNKGLKQQQQQHKKLLAAMLSQDSFESIHSPTPSVTEEDIDNEDDAMELLEDLNDLRMEGVTTLVPSGSKFNQGRPTYPAEPQAKVTLNICSRCARLQGDNLEERTEESLPILHSPDEKIPDSFDSLPGTEEALMEEGDEFEKASKLTGPGEASSGVGHSLKNYMEEDESLKQLQVVHQPWILPSDTESEGVEAEQEKRSADLLLCVPCSSCPTLVYSGL</sequence>